<evidence type="ECO:0000255" key="1">
    <source>
        <dbReference type="HAMAP-Rule" id="MF_00038"/>
    </source>
</evidence>
<reference key="1">
    <citation type="submission" date="2006-12" db="EMBL/GenBank/DDBJ databases">
        <authorList>
            <person name="Fouts D.E."/>
            <person name="Nelson K.E."/>
            <person name="Sebastian Y."/>
        </authorList>
    </citation>
    <scope>NUCLEOTIDE SEQUENCE [LARGE SCALE GENOMIC DNA]</scope>
    <source>
        <strain>81-176</strain>
    </source>
</reference>
<protein>
    <recommendedName>
        <fullName evidence="1">Phospho-N-acetylmuramoyl-pentapeptide-transferase</fullName>
        <ecNumber evidence="1">2.7.8.13</ecNumber>
    </recommendedName>
    <alternativeName>
        <fullName evidence="1">UDP-MurNAc-pentapeptide phosphotransferase</fullName>
    </alternativeName>
</protein>
<sequence length="353" mass="39297">MYYLSDLSHYAFFTYISVRAGFAFFIALCLSLFLMPKFITWAKNKNASQPIYEYAPETHKTKCHTPTMGGLIFISSAVIASLSCIKFDNIFAISALLCLILFCLIGLIDDLGKVLKKDNHSGLSPRMKLLTQIIAGLICILPLYFSSELSTELFIPFYKHPLFDMEIFAIAFWILVLISSSNAVNLTDGLDGLATVPSIFSLSTLGIFLYLSGNLNYSEYLLLPKIQGLGEVVIICAALIGALMGFLWYNCYPAQVFMGDSGSLALGGFIGFLAIISKNEILLLLIGFVFVLETVSVILQVGSFKIFNKRVFKMAPIHHHFEKVGWVENKIIVRFWMIALLSNLLALASIKLR</sequence>
<keyword id="KW-0131">Cell cycle</keyword>
<keyword id="KW-0132">Cell division</keyword>
<keyword id="KW-0997">Cell inner membrane</keyword>
<keyword id="KW-1003">Cell membrane</keyword>
<keyword id="KW-0133">Cell shape</keyword>
<keyword id="KW-0961">Cell wall biogenesis/degradation</keyword>
<keyword id="KW-0460">Magnesium</keyword>
<keyword id="KW-0472">Membrane</keyword>
<keyword id="KW-0479">Metal-binding</keyword>
<keyword id="KW-0573">Peptidoglycan synthesis</keyword>
<keyword id="KW-0808">Transferase</keyword>
<keyword id="KW-0812">Transmembrane</keyword>
<keyword id="KW-1133">Transmembrane helix</keyword>
<gene>
    <name evidence="1" type="primary">mraY</name>
    <name type="ordered locus">CJJ81176_0459</name>
</gene>
<organism>
    <name type="scientific">Campylobacter jejuni subsp. jejuni serotype O:23/36 (strain 81-176)</name>
    <dbReference type="NCBI Taxonomy" id="354242"/>
    <lineage>
        <taxon>Bacteria</taxon>
        <taxon>Pseudomonadati</taxon>
        <taxon>Campylobacterota</taxon>
        <taxon>Epsilonproteobacteria</taxon>
        <taxon>Campylobacterales</taxon>
        <taxon>Campylobacteraceae</taxon>
        <taxon>Campylobacter</taxon>
    </lineage>
</organism>
<feature type="chain" id="PRO_1000002957" description="Phospho-N-acetylmuramoyl-pentapeptide-transferase">
    <location>
        <begin position="1"/>
        <end position="353"/>
    </location>
</feature>
<feature type="transmembrane region" description="Helical" evidence="1">
    <location>
        <begin position="22"/>
        <end position="42"/>
    </location>
</feature>
<feature type="transmembrane region" description="Helical" evidence="1">
    <location>
        <begin position="65"/>
        <end position="85"/>
    </location>
</feature>
<feature type="transmembrane region" description="Helical" evidence="1">
    <location>
        <begin position="88"/>
        <end position="108"/>
    </location>
</feature>
<feature type="transmembrane region" description="Helical" evidence="1">
    <location>
        <begin position="129"/>
        <end position="149"/>
    </location>
</feature>
<feature type="transmembrane region" description="Helical" evidence="1">
    <location>
        <begin position="161"/>
        <end position="181"/>
    </location>
</feature>
<feature type="transmembrane region" description="Helical" evidence="1">
    <location>
        <begin position="192"/>
        <end position="212"/>
    </location>
</feature>
<feature type="transmembrane region" description="Helical" evidence="1">
    <location>
        <begin position="228"/>
        <end position="248"/>
    </location>
</feature>
<feature type="transmembrane region" description="Helical" evidence="1">
    <location>
        <begin position="256"/>
        <end position="276"/>
    </location>
</feature>
<feature type="transmembrane region" description="Helical" evidence="1">
    <location>
        <begin position="281"/>
        <end position="301"/>
    </location>
</feature>
<feature type="transmembrane region" description="Helical" evidence="1">
    <location>
        <begin position="330"/>
        <end position="350"/>
    </location>
</feature>
<name>MRAY_CAMJJ</name>
<proteinExistence type="inferred from homology"/>
<dbReference type="EC" id="2.7.8.13" evidence="1"/>
<dbReference type="EMBL" id="CP000538">
    <property type="protein sequence ID" value="EAQ73459.1"/>
    <property type="molecule type" value="Genomic_DNA"/>
</dbReference>
<dbReference type="RefSeq" id="WP_002855192.1">
    <property type="nucleotide sequence ID" value="NC_008787.1"/>
</dbReference>
<dbReference type="SMR" id="A1VYF0"/>
<dbReference type="KEGG" id="cjj:CJJ81176_0459"/>
<dbReference type="eggNOG" id="COG0472">
    <property type="taxonomic scope" value="Bacteria"/>
</dbReference>
<dbReference type="HOGENOM" id="CLU_023982_0_0_7"/>
<dbReference type="UniPathway" id="UPA00219"/>
<dbReference type="Proteomes" id="UP000000646">
    <property type="component" value="Chromosome"/>
</dbReference>
<dbReference type="GO" id="GO:0005886">
    <property type="term" value="C:plasma membrane"/>
    <property type="evidence" value="ECO:0007669"/>
    <property type="project" value="UniProtKB-SubCell"/>
</dbReference>
<dbReference type="GO" id="GO:0046872">
    <property type="term" value="F:metal ion binding"/>
    <property type="evidence" value="ECO:0007669"/>
    <property type="project" value="UniProtKB-KW"/>
</dbReference>
<dbReference type="GO" id="GO:0008963">
    <property type="term" value="F:phospho-N-acetylmuramoyl-pentapeptide-transferase activity"/>
    <property type="evidence" value="ECO:0007669"/>
    <property type="project" value="UniProtKB-UniRule"/>
</dbReference>
<dbReference type="GO" id="GO:0051992">
    <property type="term" value="F:UDP-N-acetylmuramoyl-L-alanyl-D-glutamyl-meso-2,6-diaminopimelyl-D-alanyl-D-alanine:undecaprenyl-phosphate transferase activity"/>
    <property type="evidence" value="ECO:0007669"/>
    <property type="project" value="RHEA"/>
</dbReference>
<dbReference type="GO" id="GO:0051301">
    <property type="term" value="P:cell division"/>
    <property type="evidence" value="ECO:0007669"/>
    <property type="project" value="UniProtKB-KW"/>
</dbReference>
<dbReference type="GO" id="GO:0071555">
    <property type="term" value="P:cell wall organization"/>
    <property type="evidence" value="ECO:0007669"/>
    <property type="project" value="UniProtKB-KW"/>
</dbReference>
<dbReference type="GO" id="GO:0009252">
    <property type="term" value="P:peptidoglycan biosynthetic process"/>
    <property type="evidence" value="ECO:0007669"/>
    <property type="project" value="UniProtKB-UniRule"/>
</dbReference>
<dbReference type="GO" id="GO:0008360">
    <property type="term" value="P:regulation of cell shape"/>
    <property type="evidence" value="ECO:0007669"/>
    <property type="project" value="UniProtKB-KW"/>
</dbReference>
<dbReference type="CDD" id="cd06852">
    <property type="entry name" value="GT_MraY"/>
    <property type="match status" value="1"/>
</dbReference>
<dbReference type="HAMAP" id="MF_00038">
    <property type="entry name" value="MraY"/>
    <property type="match status" value="1"/>
</dbReference>
<dbReference type="InterPro" id="IPR000715">
    <property type="entry name" value="Glycosyl_transferase_4"/>
</dbReference>
<dbReference type="InterPro" id="IPR003524">
    <property type="entry name" value="PNAcMuramoyl-5peptid_Trfase"/>
</dbReference>
<dbReference type="InterPro" id="IPR018480">
    <property type="entry name" value="PNAcMuramoyl-5peptid_Trfase_CS"/>
</dbReference>
<dbReference type="NCBIfam" id="TIGR00445">
    <property type="entry name" value="mraY"/>
    <property type="match status" value="1"/>
</dbReference>
<dbReference type="PANTHER" id="PTHR22926">
    <property type="entry name" value="PHOSPHO-N-ACETYLMURAMOYL-PENTAPEPTIDE-TRANSFERASE"/>
    <property type="match status" value="1"/>
</dbReference>
<dbReference type="PANTHER" id="PTHR22926:SF5">
    <property type="entry name" value="PHOSPHO-N-ACETYLMURAMOYL-PENTAPEPTIDE-TRANSFERASE HOMOLOG"/>
    <property type="match status" value="1"/>
</dbReference>
<dbReference type="Pfam" id="PF00953">
    <property type="entry name" value="Glycos_transf_4"/>
    <property type="match status" value="1"/>
</dbReference>
<dbReference type="PROSITE" id="PS01347">
    <property type="entry name" value="MRAY_1"/>
    <property type="match status" value="1"/>
</dbReference>
<dbReference type="PROSITE" id="PS01348">
    <property type="entry name" value="MRAY_2"/>
    <property type="match status" value="1"/>
</dbReference>
<accession>A1VYF0</accession>
<comment type="function">
    <text evidence="1">Catalyzes the initial step of the lipid cycle reactions in the biosynthesis of the cell wall peptidoglycan: transfers peptidoglycan precursor phospho-MurNAc-pentapeptide from UDP-MurNAc-pentapeptide onto the lipid carrier undecaprenyl phosphate, yielding undecaprenyl-pyrophosphoryl-MurNAc-pentapeptide, known as lipid I.</text>
</comment>
<comment type="catalytic activity">
    <reaction evidence="1">
        <text>UDP-N-acetyl-alpha-D-muramoyl-L-alanyl-gamma-D-glutamyl-meso-2,6-diaminopimeloyl-D-alanyl-D-alanine + di-trans,octa-cis-undecaprenyl phosphate = di-trans,octa-cis-undecaprenyl diphospho-N-acetyl-alpha-D-muramoyl-L-alanyl-D-glutamyl-meso-2,6-diaminopimeloyl-D-alanyl-D-alanine + UMP</text>
        <dbReference type="Rhea" id="RHEA:28386"/>
        <dbReference type="ChEBI" id="CHEBI:57865"/>
        <dbReference type="ChEBI" id="CHEBI:60392"/>
        <dbReference type="ChEBI" id="CHEBI:61386"/>
        <dbReference type="ChEBI" id="CHEBI:61387"/>
        <dbReference type="EC" id="2.7.8.13"/>
    </reaction>
</comment>
<comment type="cofactor">
    <cofactor evidence="1">
        <name>Mg(2+)</name>
        <dbReference type="ChEBI" id="CHEBI:18420"/>
    </cofactor>
</comment>
<comment type="pathway">
    <text evidence="1">Cell wall biogenesis; peptidoglycan biosynthesis.</text>
</comment>
<comment type="subcellular location">
    <subcellularLocation>
        <location evidence="1">Cell inner membrane</location>
        <topology evidence="1">Multi-pass membrane protein</topology>
    </subcellularLocation>
</comment>
<comment type="similarity">
    <text evidence="1">Belongs to the glycosyltransferase 4 family. MraY subfamily.</text>
</comment>